<organism>
    <name type="scientific">Burkholderia orbicola (strain AU 1054)</name>
    <dbReference type="NCBI Taxonomy" id="331271"/>
    <lineage>
        <taxon>Bacteria</taxon>
        <taxon>Pseudomonadati</taxon>
        <taxon>Pseudomonadota</taxon>
        <taxon>Betaproteobacteria</taxon>
        <taxon>Burkholderiales</taxon>
        <taxon>Burkholderiaceae</taxon>
        <taxon>Burkholderia</taxon>
        <taxon>Burkholderia cepacia complex</taxon>
        <taxon>Burkholderia orbicola</taxon>
    </lineage>
</organism>
<gene>
    <name evidence="1" type="primary">der</name>
    <name type="synonym">engA</name>
    <name type="ordered locus">Bcen_6271</name>
</gene>
<reference key="1">
    <citation type="submission" date="2006-05" db="EMBL/GenBank/DDBJ databases">
        <title>Complete sequence of chromosome 3 of Burkholderia cenocepacia AU 1054.</title>
        <authorList>
            <consortium name="US DOE Joint Genome Institute"/>
            <person name="Copeland A."/>
            <person name="Lucas S."/>
            <person name="Lapidus A."/>
            <person name="Barry K."/>
            <person name="Detter J.C."/>
            <person name="Glavina del Rio T."/>
            <person name="Hammon N."/>
            <person name="Israni S."/>
            <person name="Dalin E."/>
            <person name="Tice H."/>
            <person name="Pitluck S."/>
            <person name="Chain P."/>
            <person name="Malfatti S."/>
            <person name="Shin M."/>
            <person name="Vergez L."/>
            <person name="Schmutz J."/>
            <person name="Larimer F."/>
            <person name="Land M."/>
            <person name="Hauser L."/>
            <person name="Kyrpides N."/>
            <person name="Lykidis A."/>
            <person name="LiPuma J.J."/>
            <person name="Konstantinidis K."/>
            <person name="Tiedje J.M."/>
            <person name="Richardson P."/>
        </authorList>
    </citation>
    <scope>NUCLEOTIDE SEQUENCE [LARGE SCALE GENOMIC DNA]</scope>
    <source>
        <strain>AU 1054</strain>
    </source>
</reference>
<feature type="chain" id="PRO_1000011578" description="GTPase Der">
    <location>
        <begin position="1"/>
        <end position="445"/>
    </location>
</feature>
<feature type="domain" description="EngA-type G 1">
    <location>
        <begin position="3"/>
        <end position="167"/>
    </location>
</feature>
<feature type="domain" description="EngA-type G 2">
    <location>
        <begin position="180"/>
        <end position="353"/>
    </location>
</feature>
<feature type="domain" description="KH-like" evidence="1">
    <location>
        <begin position="354"/>
        <end position="438"/>
    </location>
</feature>
<feature type="binding site" evidence="1">
    <location>
        <begin position="9"/>
        <end position="16"/>
    </location>
    <ligand>
        <name>GTP</name>
        <dbReference type="ChEBI" id="CHEBI:37565"/>
        <label>1</label>
    </ligand>
</feature>
<feature type="binding site" evidence="1">
    <location>
        <begin position="56"/>
        <end position="60"/>
    </location>
    <ligand>
        <name>GTP</name>
        <dbReference type="ChEBI" id="CHEBI:37565"/>
        <label>1</label>
    </ligand>
</feature>
<feature type="binding site" evidence="1">
    <location>
        <begin position="119"/>
        <end position="122"/>
    </location>
    <ligand>
        <name>GTP</name>
        <dbReference type="ChEBI" id="CHEBI:37565"/>
        <label>1</label>
    </ligand>
</feature>
<feature type="binding site" evidence="1">
    <location>
        <begin position="186"/>
        <end position="193"/>
    </location>
    <ligand>
        <name>GTP</name>
        <dbReference type="ChEBI" id="CHEBI:37565"/>
        <label>2</label>
    </ligand>
</feature>
<feature type="binding site" evidence="1">
    <location>
        <begin position="233"/>
        <end position="237"/>
    </location>
    <ligand>
        <name>GTP</name>
        <dbReference type="ChEBI" id="CHEBI:37565"/>
        <label>2</label>
    </ligand>
</feature>
<feature type="binding site" evidence="1">
    <location>
        <begin position="298"/>
        <end position="301"/>
    </location>
    <ligand>
        <name>GTP</name>
        <dbReference type="ChEBI" id="CHEBI:37565"/>
        <label>2</label>
    </ligand>
</feature>
<keyword id="KW-0342">GTP-binding</keyword>
<keyword id="KW-0547">Nucleotide-binding</keyword>
<keyword id="KW-0677">Repeat</keyword>
<keyword id="KW-0690">Ribosome biogenesis</keyword>
<proteinExistence type="inferred from homology"/>
<protein>
    <recommendedName>
        <fullName evidence="1">GTPase Der</fullName>
    </recommendedName>
    <alternativeName>
        <fullName evidence="1">GTP-binding protein EngA</fullName>
    </alternativeName>
</protein>
<accession>Q1BGX0</accession>
<dbReference type="EMBL" id="CP000380">
    <property type="protein sequence ID" value="ABF81135.1"/>
    <property type="molecule type" value="Genomic_DNA"/>
</dbReference>
<dbReference type="SMR" id="Q1BGX0"/>
<dbReference type="HOGENOM" id="CLU_016077_6_2_4"/>
<dbReference type="GO" id="GO:0016887">
    <property type="term" value="F:ATP hydrolysis activity"/>
    <property type="evidence" value="ECO:0007669"/>
    <property type="project" value="InterPro"/>
</dbReference>
<dbReference type="GO" id="GO:0005525">
    <property type="term" value="F:GTP binding"/>
    <property type="evidence" value="ECO:0007669"/>
    <property type="project" value="UniProtKB-UniRule"/>
</dbReference>
<dbReference type="GO" id="GO:0043022">
    <property type="term" value="F:ribosome binding"/>
    <property type="evidence" value="ECO:0007669"/>
    <property type="project" value="TreeGrafter"/>
</dbReference>
<dbReference type="GO" id="GO:0042254">
    <property type="term" value="P:ribosome biogenesis"/>
    <property type="evidence" value="ECO:0007669"/>
    <property type="project" value="UniProtKB-KW"/>
</dbReference>
<dbReference type="CDD" id="cd01894">
    <property type="entry name" value="EngA1"/>
    <property type="match status" value="1"/>
</dbReference>
<dbReference type="CDD" id="cd01895">
    <property type="entry name" value="EngA2"/>
    <property type="match status" value="1"/>
</dbReference>
<dbReference type="FunFam" id="3.30.300.20:FF:000004">
    <property type="entry name" value="GTPase Der"/>
    <property type="match status" value="1"/>
</dbReference>
<dbReference type="FunFam" id="3.40.50.300:FF:000040">
    <property type="entry name" value="GTPase Der"/>
    <property type="match status" value="1"/>
</dbReference>
<dbReference type="FunFam" id="3.40.50.300:FF:000057">
    <property type="entry name" value="GTPase Der"/>
    <property type="match status" value="1"/>
</dbReference>
<dbReference type="Gene3D" id="3.30.300.20">
    <property type="match status" value="1"/>
</dbReference>
<dbReference type="Gene3D" id="3.40.50.300">
    <property type="entry name" value="P-loop containing nucleotide triphosphate hydrolases"/>
    <property type="match status" value="2"/>
</dbReference>
<dbReference type="HAMAP" id="MF_00195">
    <property type="entry name" value="GTPase_Der"/>
    <property type="match status" value="1"/>
</dbReference>
<dbReference type="InterPro" id="IPR003593">
    <property type="entry name" value="AAA+_ATPase"/>
</dbReference>
<dbReference type="InterPro" id="IPR031166">
    <property type="entry name" value="G_ENGA"/>
</dbReference>
<dbReference type="InterPro" id="IPR006073">
    <property type="entry name" value="GTP-bd"/>
</dbReference>
<dbReference type="InterPro" id="IPR016484">
    <property type="entry name" value="GTPase_Der"/>
</dbReference>
<dbReference type="InterPro" id="IPR032859">
    <property type="entry name" value="KH_dom-like"/>
</dbReference>
<dbReference type="InterPro" id="IPR015946">
    <property type="entry name" value="KH_dom-like_a/b"/>
</dbReference>
<dbReference type="InterPro" id="IPR027417">
    <property type="entry name" value="P-loop_NTPase"/>
</dbReference>
<dbReference type="InterPro" id="IPR005225">
    <property type="entry name" value="Small_GTP-bd"/>
</dbReference>
<dbReference type="NCBIfam" id="TIGR03594">
    <property type="entry name" value="GTPase_EngA"/>
    <property type="match status" value="1"/>
</dbReference>
<dbReference type="NCBIfam" id="TIGR00231">
    <property type="entry name" value="small_GTP"/>
    <property type="match status" value="2"/>
</dbReference>
<dbReference type="PANTHER" id="PTHR43834">
    <property type="entry name" value="GTPASE DER"/>
    <property type="match status" value="1"/>
</dbReference>
<dbReference type="PANTHER" id="PTHR43834:SF6">
    <property type="entry name" value="GTPASE DER"/>
    <property type="match status" value="1"/>
</dbReference>
<dbReference type="Pfam" id="PF14714">
    <property type="entry name" value="KH_dom-like"/>
    <property type="match status" value="1"/>
</dbReference>
<dbReference type="Pfam" id="PF01926">
    <property type="entry name" value="MMR_HSR1"/>
    <property type="match status" value="2"/>
</dbReference>
<dbReference type="PIRSF" id="PIRSF006485">
    <property type="entry name" value="GTP-binding_EngA"/>
    <property type="match status" value="1"/>
</dbReference>
<dbReference type="PRINTS" id="PR00326">
    <property type="entry name" value="GTP1OBG"/>
</dbReference>
<dbReference type="SMART" id="SM00382">
    <property type="entry name" value="AAA"/>
    <property type="match status" value="2"/>
</dbReference>
<dbReference type="SUPFAM" id="SSF52540">
    <property type="entry name" value="P-loop containing nucleoside triphosphate hydrolases"/>
    <property type="match status" value="2"/>
</dbReference>
<dbReference type="PROSITE" id="PS51712">
    <property type="entry name" value="G_ENGA"/>
    <property type="match status" value="2"/>
</dbReference>
<sequence length="445" mass="48982">MKPVIALVGRPNVGKSTLFNRLTRSRDALVADLPGLTRDRHYGEGRVGERPYLVVDTGGFEPVAKDGILHEMARQTRQAVEEADVVVFIVDGRNGLAPQDKSIADYLRKTGRPIFLVVNKAEGMKYTAVATDFYELGLGDPRAISAAHGDGVTDMINEALEVAYAGQPEEADEDDPSRGIKIAIVGRPNVGKSTLVNALIGEDRVIAFDMPGTTRDSIYVDFERNGKKYTLIDTAGLRRRGKVFEAIEKFSVVKTLQSISDANVVILLLDAQQDISDQDAHIAGFVVEQGRALVIGVNKWDGLDDHARDRAKADLTRKLKFLDFAKSHFISAAKKTGIGALMRSVDDAYAAAMAKLPTPKLTRALIEAVEFQQPRRRGPVRPKLRYAHQGGQNPPIIVIHGNALDAVTETYKRYLENRFRETFSLTGTPLRIEFRSSNNPYADKG</sequence>
<evidence type="ECO:0000255" key="1">
    <source>
        <dbReference type="HAMAP-Rule" id="MF_00195"/>
    </source>
</evidence>
<name>DER_BURO1</name>
<comment type="function">
    <text evidence="1">GTPase that plays an essential role in the late steps of ribosome biogenesis.</text>
</comment>
<comment type="subunit">
    <text evidence="1">Associates with the 50S ribosomal subunit.</text>
</comment>
<comment type="similarity">
    <text evidence="1">Belongs to the TRAFAC class TrmE-Era-EngA-EngB-Septin-like GTPase superfamily. EngA (Der) GTPase family.</text>
</comment>